<sequence>MLIFFELGNSQLKAATILKGNYQFLGSVRHDAILSGEFIESFNLNEQNPTAVYVSSVAPSQLNAALTEVIQQHFKLYPTFLATQPSCCGIECGYEKFDQFGVDRWMAILGACSGSNKPTFIVDAGTALTVDAVIDKKHIGGFIVPGLGLMRDSLLKNTALSEQSLVLQSVQDGLLAKDTAGGVMGGTLYMLGSYLNSLLVDLELETGRKFDCIGTGGDFLSLKPVLDKPYNYVEDLTLRGMKEVIESL</sequence>
<protein>
    <recommendedName>
        <fullName evidence="1">Type III pantothenate kinase</fullName>
        <ecNumber evidence="1">2.7.1.33</ecNumber>
    </recommendedName>
    <alternativeName>
        <fullName evidence="1">PanK-III</fullName>
    </alternativeName>
    <alternativeName>
        <fullName evidence="1">Pantothenic acid kinase</fullName>
    </alternativeName>
</protein>
<dbReference type="EC" id="2.7.1.33" evidence="1"/>
<dbReference type="EMBL" id="CP000109">
    <property type="protein sequence ID" value="ABB42537.1"/>
    <property type="molecule type" value="Genomic_DNA"/>
</dbReference>
<dbReference type="SMR" id="Q31E86"/>
<dbReference type="STRING" id="317025.Tcr_1947"/>
<dbReference type="KEGG" id="tcx:Tcr_1947"/>
<dbReference type="eggNOG" id="COG1521">
    <property type="taxonomic scope" value="Bacteria"/>
</dbReference>
<dbReference type="HOGENOM" id="CLU_066627_0_0_6"/>
<dbReference type="OrthoDB" id="9781305at2"/>
<dbReference type="UniPathway" id="UPA00241">
    <property type="reaction ID" value="UER00352"/>
</dbReference>
<dbReference type="GO" id="GO:0005737">
    <property type="term" value="C:cytoplasm"/>
    <property type="evidence" value="ECO:0007669"/>
    <property type="project" value="UniProtKB-SubCell"/>
</dbReference>
<dbReference type="GO" id="GO:0005524">
    <property type="term" value="F:ATP binding"/>
    <property type="evidence" value="ECO:0007669"/>
    <property type="project" value="UniProtKB-UniRule"/>
</dbReference>
<dbReference type="GO" id="GO:0046872">
    <property type="term" value="F:metal ion binding"/>
    <property type="evidence" value="ECO:0007669"/>
    <property type="project" value="UniProtKB-KW"/>
</dbReference>
<dbReference type="GO" id="GO:0004594">
    <property type="term" value="F:pantothenate kinase activity"/>
    <property type="evidence" value="ECO:0007669"/>
    <property type="project" value="UniProtKB-UniRule"/>
</dbReference>
<dbReference type="GO" id="GO:0015937">
    <property type="term" value="P:coenzyme A biosynthetic process"/>
    <property type="evidence" value="ECO:0007669"/>
    <property type="project" value="UniProtKB-UniRule"/>
</dbReference>
<dbReference type="CDD" id="cd24015">
    <property type="entry name" value="ASKHA_NBD_PanK-III"/>
    <property type="match status" value="1"/>
</dbReference>
<dbReference type="Gene3D" id="3.30.420.40">
    <property type="match status" value="2"/>
</dbReference>
<dbReference type="HAMAP" id="MF_01274">
    <property type="entry name" value="Pantothen_kinase_3"/>
    <property type="match status" value="1"/>
</dbReference>
<dbReference type="InterPro" id="IPR043129">
    <property type="entry name" value="ATPase_NBD"/>
</dbReference>
<dbReference type="InterPro" id="IPR004619">
    <property type="entry name" value="Type_III_PanK"/>
</dbReference>
<dbReference type="NCBIfam" id="TIGR00671">
    <property type="entry name" value="baf"/>
    <property type="match status" value="1"/>
</dbReference>
<dbReference type="PANTHER" id="PTHR34265">
    <property type="entry name" value="TYPE III PANTOTHENATE KINASE"/>
    <property type="match status" value="1"/>
</dbReference>
<dbReference type="PANTHER" id="PTHR34265:SF1">
    <property type="entry name" value="TYPE III PANTOTHENATE KINASE"/>
    <property type="match status" value="1"/>
</dbReference>
<dbReference type="Pfam" id="PF03309">
    <property type="entry name" value="Pan_kinase"/>
    <property type="match status" value="1"/>
</dbReference>
<dbReference type="SUPFAM" id="SSF53067">
    <property type="entry name" value="Actin-like ATPase domain"/>
    <property type="match status" value="2"/>
</dbReference>
<comment type="function">
    <text evidence="1">Catalyzes the phosphorylation of pantothenate (Pan), the first step in CoA biosynthesis.</text>
</comment>
<comment type="catalytic activity">
    <reaction evidence="1">
        <text>(R)-pantothenate + ATP = (R)-4'-phosphopantothenate + ADP + H(+)</text>
        <dbReference type="Rhea" id="RHEA:16373"/>
        <dbReference type="ChEBI" id="CHEBI:10986"/>
        <dbReference type="ChEBI" id="CHEBI:15378"/>
        <dbReference type="ChEBI" id="CHEBI:29032"/>
        <dbReference type="ChEBI" id="CHEBI:30616"/>
        <dbReference type="ChEBI" id="CHEBI:456216"/>
        <dbReference type="EC" id="2.7.1.33"/>
    </reaction>
</comment>
<comment type="cofactor">
    <cofactor evidence="1">
        <name>NH4(+)</name>
        <dbReference type="ChEBI" id="CHEBI:28938"/>
    </cofactor>
    <cofactor evidence="1">
        <name>K(+)</name>
        <dbReference type="ChEBI" id="CHEBI:29103"/>
    </cofactor>
    <text evidence="1">A monovalent cation. Ammonium or potassium.</text>
</comment>
<comment type="pathway">
    <text evidence="1">Cofactor biosynthesis; coenzyme A biosynthesis; CoA from (R)-pantothenate: step 1/5.</text>
</comment>
<comment type="subunit">
    <text evidence="1">Homodimer.</text>
</comment>
<comment type="subcellular location">
    <subcellularLocation>
        <location evidence="1">Cytoplasm</location>
    </subcellularLocation>
</comment>
<comment type="similarity">
    <text evidence="1">Belongs to the type III pantothenate kinase family.</text>
</comment>
<name>COAX_HYDCU</name>
<gene>
    <name evidence="1" type="primary">coaX</name>
    <name type="ordered locus">Tcr_1947</name>
</gene>
<accession>Q31E86</accession>
<keyword id="KW-0067">ATP-binding</keyword>
<keyword id="KW-0173">Coenzyme A biosynthesis</keyword>
<keyword id="KW-0963">Cytoplasm</keyword>
<keyword id="KW-0418">Kinase</keyword>
<keyword id="KW-0479">Metal-binding</keyword>
<keyword id="KW-0547">Nucleotide-binding</keyword>
<keyword id="KW-0630">Potassium</keyword>
<keyword id="KW-0808">Transferase</keyword>
<organism>
    <name type="scientific">Hydrogenovibrio crunogenus (strain DSM 25203 / XCL-2)</name>
    <name type="common">Thiomicrospira crunogena</name>
    <dbReference type="NCBI Taxonomy" id="317025"/>
    <lineage>
        <taxon>Bacteria</taxon>
        <taxon>Pseudomonadati</taxon>
        <taxon>Pseudomonadota</taxon>
        <taxon>Gammaproteobacteria</taxon>
        <taxon>Thiotrichales</taxon>
        <taxon>Piscirickettsiaceae</taxon>
        <taxon>Hydrogenovibrio</taxon>
    </lineage>
</organism>
<proteinExistence type="inferred from homology"/>
<feature type="chain" id="PRO_0000270907" description="Type III pantothenate kinase">
    <location>
        <begin position="1"/>
        <end position="248"/>
    </location>
</feature>
<feature type="active site" description="Proton acceptor" evidence="1">
    <location>
        <position position="103"/>
    </location>
</feature>
<feature type="binding site" evidence="1">
    <location>
        <begin position="6"/>
        <end position="13"/>
    </location>
    <ligand>
        <name>ATP</name>
        <dbReference type="ChEBI" id="CHEBI:30616"/>
    </ligand>
</feature>
<feature type="binding site" evidence="1">
    <location>
        <position position="94"/>
    </location>
    <ligand>
        <name>substrate</name>
    </ligand>
</feature>
<feature type="binding site" evidence="1">
    <location>
        <begin position="101"/>
        <end position="104"/>
    </location>
    <ligand>
        <name>substrate</name>
    </ligand>
</feature>
<feature type="binding site" evidence="1">
    <location>
        <position position="123"/>
    </location>
    <ligand>
        <name>K(+)</name>
        <dbReference type="ChEBI" id="CHEBI:29103"/>
    </ligand>
</feature>
<feature type="binding site" evidence="1">
    <location>
        <position position="126"/>
    </location>
    <ligand>
        <name>ATP</name>
        <dbReference type="ChEBI" id="CHEBI:30616"/>
    </ligand>
</feature>
<feature type="binding site" evidence="1">
    <location>
        <position position="179"/>
    </location>
    <ligand>
        <name>substrate</name>
    </ligand>
</feature>
<reference key="1">
    <citation type="journal article" date="2006" name="PLoS Biol.">
        <title>The genome of deep-sea vent chemolithoautotroph Thiomicrospira crunogena XCL-2.</title>
        <authorList>
            <person name="Scott K.M."/>
            <person name="Sievert S.M."/>
            <person name="Abril F.N."/>
            <person name="Ball L.A."/>
            <person name="Barrett C.J."/>
            <person name="Blake R.A."/>
            <person name="Boller A.J."/>
            <person name="Chain P.S.G."/>
            <person name="Clark J.A."/>
            <person name="Davis C.R."/>
            <person name="Detter C."/>
            <person name="Do K.F."/>
            <person name="Dobrinski K.P."/>
            <person name="Faza B.I."/>
            <person name="Fitzpatrick K.A."/>
            <person name="Freyermuth S.K."/>
            <person name="Harmer T.L."/>
            <person name="Hauser L.J."/>
            <person name="Huegler M."/>
            <person name="Kerfeld C.A."/>
            <person name="Klotz M.G."/>
            <person name="Kong W.W."/>
            <person name="Land M."/>
            <person name="Lapidus A."/>
            <person name="Larimer F.W."/>
            <person name="Longo D.L."/>
            <person name="Lucas S."/>
            <person name="Malfatti S.A."/>
            <person name="Massey S.E."/>
            <person name="Martin D.D."/>
            <person name="McCuddin Z."/>
            <person name="Meyer F."/>
            <person name="Moore J.L."/>
            <person name="Ocampo L.H. Jr."/>
            <person name="Paul J.H."/>
            <person name="Paulsen I.T."/>
            <person name="Reep D.K."/>
            <person name="Ren Q."/>
            <person name="Ross R.L."/>
            <person name="Sato P.Y."/>
            <person name="Thomas P."/>
            <person name="Tinkham L.E."/>
            <person name="Zeruth G.T."/>
        </authorList>
    </citation>
    <scope>NUCLEOTIDE SEQUENCE [LARGE SCALE GENOMIC DNA]</scope>
    <source>
        <strain>DSM 25203 / XCL-2</strain>
    </source>
</reference>
<evidence type="ECO:0000255" key="1">
    <source>
        <dbReference type="HAMAP-Rule" id="MF_01274"/>
    </source>
</evidence>